<organism>
    <name type="scientific">Xylella fastidiosa (strain M12)</name>
    <dbReference type="NCBI Taxonomy" id="405440"/>
    <lineage>
        <taxon>Bacteria</taxon>
        <taxon>Pseudomonadati</taxon>
        <taxon>Pseudomonadota</taxon>
        <taxon>Gammaproteobacteria</taxon>
        <taxon>Lysobacterales</taxon>
        <taxon>Lysobacteraceae</taxon>
        <taxon>Xylella</taxon>
    </lineage>
</organism>
<proteinExistence type="inferred from homology"/>
<protein>
    <recommendedName>
        <fullName evidence="1">Transcription antitermination protein NusB</fullName>
    </recommendedName>
    <alternativeName>
        <fullName evidence="1">Antitermination factor NusB</fullName>
    </alternativeName>
</protein>
<evidence type="ECO:0000255" key="1">
    <source>
        <dbReference type="HAMAP-Rule" id="MF_00073"/>
    </source>
</evidence>
<dbReference type="EMBL" id="CP000941">
    <property type="protein sequence ID" value="ACA12781.1"/>
    <property type="molecule type" value="Genomic_DNA"/>
</dbReference>
<dbReference type="RefSeq" id="WP_004086409.1">
    <property type="nucleotide sequence ID" value="NC_010513.1"/>
</dbReference>
<dbReference type="SMR" id="B0U4K2"/>
<dbReference type="KEGG" id="xfm:Xfasm12_1904"/>
<dbReference type="HOGENOM" id="CLU_087843_4_1_6"/>
<dbReference type="GO" id="GO:0005829">
    <property type="term" value="C:cytosol"/>
    <property type="evidence" value="ECO:0007669"/>
    <property type="project" value="TreeGrafter"/>
</dbReference>
<dbReference type="GO" id="GO:0003723">
    <property type="term" value="F:RNA binding"/>
    <property type="evidence" value="ECO:0007669"/>
    <property type="project" value="UniProtKB-UniRule"/>
</dbReference>
<dbReference type="GO" id="GO:0006353">
    <property type="term" value="P:DNA-templated transcription termination"/>
    <property type="evidence" value="ECO:0007669"/>
    <property type="project" value="UniProtKB-UniRule"/>
</dbReference>
<dbReference type="GO" id="GO:0031564">
    <property type="term" value="P:transcription antitermination"/>
    <property type="evidence" value="ECO:0007669"/>
    <property type="project" value="UniProtKB-KW"/>
</dbReference>
<dbReference type="FunFam" id="1.10.940.10:FF:000001">
    <property type="entry name" value="Transcription antitermination factor NusB"/>
    <property type="match status" value="1"/>
</dbReference>
<dbReference type="Gene3D" id="1.10.940.10">
    <property type="entry name" value="NusB-like"/>
    <property type="match status" value="1"/>
</dbReference>
<dbReference type="HAMAP" id="MF_00073">
    <property type="entry name" value="NusB"/>
    <property type="match status" value="1"/>
</dbReference>
<dbReference type="InterPro" id="IPR035926">
    <property type="entry name" value="NusB-like_sf"/>
</dbReference>
<dbReference type="InterPro" id="IPR011605">
    <property type="entry name" value="NusB_fam"/>
</dbReference>
<dbReference type="InterPro" id="IPR006027">
    <property type="entry name" value="NusB_RsmB_TIM44"/>
</dbReference>
<dbReference type="NCBIfam" id="TIGR01951">
    <property type="entry name" value="nusB"/>
    <property type="match status" value="1"/>
</dbReference>
<dbReference type="PANTHER" id="PTHR11078:SF3">
    <property type="entry name" value="ANTITERMINATION NUSB DOMAIN-CONTAINING PROTEIN"/>
    <property type="match status" value="1"/>
</dbReference>
<dbReference type="PANTHER" id="PTHR11078">
    <property type="entry name" value="N UTILIZATION SUBSTANCE PROTEIN B-RELATED"/>
    <property type="match status" value="1"/>
</dbReference>
<dbReference type="Pfam" id="PF01029">
    <property type="entry name" value="NusB"/>
    <property type="match status" value="1"/>
</dbReference>
<dbReference type="SUPFAM" id="SSF48013">
    <property type="entry name" value="NusB-like"/>
    <property type="match status" value="1"/>
</dbReference>
<name>NUSB_XYLFM</name>
<gene>
    <name evidence="1" type="primary">nusB</name>
    <name type="ordered locus">Xfasm12_1904</name>
</gene>
<reference key="1">
    <citation type="journal article" date="2010" name="J. Bacteriol.">
        <title>Whole genome sequences of two Xylella fastidiosa strains (M12 and M23) causing almond leaf scorch disease in California.</title>
        <authorList>
            <person name="Chen J."/>
            <person name="Xie G."/>
            <person name="Han S."/>
            <person name="Chertkov O."/>
            <person name="Sims D."/>
            <person name="Civerolo E.L."/>
        </authorList>
    </citation>
    <scope>NUCLEOTIDE SEQUENCE [LARGE SCALE GENOMIC DNA]</scope>
    <source>
        <strain>M12</strain>
    </source>
</reference>
<accession>B0U4K2</accession>
<keyword id="KW-0694">RNA-binding</keyword>
<keyword id="KW-0804">Transcription</keyword>
<keyword id="KW-0889">Transcription antitermination</keyword>
<keyword id="KW-0805">Transcription regulation</keyword>
<sequence length="157" mass="17589">MSKVSGGGPCPRRRDGVDPALRSRARRRALQAVYAWQISGGVAKQVIAHFAHEQAYEVADLVYFEDLVEGVLTHCAELDEKLTPYLDRTIEEVDAIERAVLRLGAYELLYRQDVPYRVVINEAIMTAKRFGSKYGHTYVNGVLDRAALALRKVEVLG</sequence>
<feature type="chain" id="PRO_1000092603" description="Transcription antitermination protein NusB">
    <location>
        <begin position="1"/>
        <end position="157"/>
    </location>
</feature>
<comment type="function">
    <text evidence="1">Involved in transcription antitermination. Required for transcription of ribosomal RNA (rRNA) genes. Binds specifically to the boxA antiterminator sequence of the ribosomal RNA (rrn) operons.</text>
</comment>
<comment type="similarity">
    <text evidence="1">Belongs to the NusB family.</text>
</comment>